<comment type="function">
    <text evidence="1">May function as histone H3 lysine demethylase and be involved in regulation of gene expression.</text>
</comment>
<comment type="cofactor">
    <cofactor evidence="2">
        <name>Fe(2+)</name>
        <dbReference type="ChEBI" id="CHEBI:29033"/>
    </cofactor>
    <text evidence="2">Binds 1 Fe(2+) ion per subunit.</text>
</comment>
<comment type="subcellular location">
    <subcellularLocation>
        <location evidence="8">Nucleus</location>
    </subcellularLocation>
</comment>
<comment type="tissue specificity">
    <text evidence="6">Mostly expressed in leaves, and, to a lower extent, in inflorescences, roots, siliques and stems.</text>
</comment>
<comment type="similarity">
    <text evidence="8">Belongs to the JARID1 histone demethylase family.</text>
</comment>
<comment type="sequence caution" evidence="8">
    <conflict type="erroneous gene model prediction">
        <sequence resource="EMBL-CDS" id="AAF71807"/>
    </conflict>
</comment>
<evidence type="ECO:0000250" key="1">
    <source>
        <dbReference type="UniProtKB" id="O64752"/>
    </source>
</evidence>
<evidence type="ECO:0000250" key="2">
    <source>
        <dbReference type="UniProtKB" id="Q8GUI6"/>
    </source>
</evidence>
<evidence type="ECO:0000255" key="3">
    <source>
        <dbReference type="PROSITE-ProRule" id="PRU00080"/>
    </source>
</evidence>
<evidence type="ECO:0000255" key="4">
    <source>
        <dbReference type="PROSITE-ProRule" id="PRU00538"/>
    </source>
</evidence>
<evidence type="ECO:0000256" key="5">
    <source>
        <dbReference type="SAM" id="MobiDB-lite"/>
    </source>
</evidence>
<evidence type="ECO:0000269" key="6">
    <source>
    </source>
</evidence>
<evidence type="ECO:0000303" key="7">
    <source>
    </source>
</evidence>
<evidence type="ECO:0000305" key="8"/>
<evidence type="ECO:0000312" key="9">
    <source>
        <dbReference type="Araport" id="AT1G78280"/>
    </source>
</evidence>
<evidence type="ECO:0000312" key="10">
    <source>
        <dbReference type="EMBL" id="AAF71807.1"/>
    </source>
</evidence>
<keyword id="KW-0408">Iron</keyword>
<keyword id="KW-0479">Metal-binding</keyword>
<keyword id="KW-0539">Nucleus</keyword>
<keyword id="KW-0560">Oxidoreductase</keyword>
<keyword id="KW-1185">Reference proteome</keyword>
<gene>
    <name evidence="7" type="primary">JMJ21</name>
    <name evidence="9" type="ordered locus">At1g78280</name>
    <name evidence="10" type="ORF">F3F9.18</name>
</gene>
<reference key="1">
    <citation type="journal article" date="2000" name="Nature">
        <title>Sequence and analysis of chromosome 1 of the plant Arabidopsis thaliana.</title>
        <authorList>
            <person name="Theologis A."/>
            <person name="Ecker J.R."/>
            <person name="Palm C.J."/>
            <person name="Federspiel N.A."/>
            <person name="Kaul S."/>
            <person name="White O."/>
            <person name="Alonso J."/>
            <person name="Altafi H."/>
            <person name="Araujo R."/>
            <person name="Bowman C.L."/>
            <person name="Brooks S.Y."/>
            <person name="Buehler E."/>
            <person name="Chan A."/>
            <person name="Chao Q."/>
            <person name="Chen H."/>
            <person name="Cheuk R.F."/>
            <person name="Chin C.W."/>
            <person name="Chung M.K."/>
            <person name="Conn L."/>
            <person name="Conway A.B."/>
            <person name="Conway A.R."/>
            <person name="Creasy T.H."/>
            <person name="Dewar K."/>
            <person name="Dunn P."/>
            <person name="Etgu P."/>
            <person name="Feldblyum T.V."/>
            <person name="Feng J.-D."/>
            <person name="Fong B."/>
            <person name="Fujii C.Y."/>
            <person name="Gill J.E."/>
            <person name="Goldsmith A.D."/>
            <person name="Haas B."/>
            <person name="Hansen N.F."/>
            <person name="Hughes B."/>
            <person name="Huizar L."/>
            <person name="Hunter J.L."/>
            <person name="Jenkins J."/>
            <person name="Johnson-Hopson C."/>
            <person name="Khan S."/>
            <person name="Khaykin E."/>
            <person name="Kim C.J."/>
            <person name="Koo H.L."/>
            <person name="Kremenetskaia I."/>
            <person name="Kurtz D.B."/>
            <person name="Kwan A."/>
            <person name="Lam B."/>
            <person name="Langin-Hooper S."/>
            <person name="Lee A."/>
            <person name="Lee J.M."/>
            <person name="Lenz C.A."/>
            <person name="Li J.H."/>
            <person name="Li Y.-P."/>
            <person name="Lin X."/>
            <person name="Liu S.X."/>
            <person name="Liu Z.A."/>
            <person name="Luros J.S."/>
            <person name="Maiti R."/>
            <person name="Marziali A."/>
            <person name="Militscher J."/>
            <person name="Miranda M."/>
            <person name="Nguyen M."/>
            <person name="Nierman W.C."/>
            <person name="Osborne B.I."/>
            <person name="Pai G."/>
            <person name="Peterson J."/>
            <person name="Pham P.K."/>
            <person name="Rizzo M."/>
            <person name="Rooney T."/>
            <person name="Rowley D."/>
            <person name="Sakano H."/>
            <person name="Salzberg S.L."/>
            <person name="Schwartz J.R."/>
            <person name="Shinn P."/>
            <person name="Southwick A.M."/>
            <person name="Sun H."/>
            <person name="Tallon L.J."/>
            <person name="Tambunga G."/>
            <person name="Toriumi M.J."/>
            <person name="Town C.D."/>
            <person name="Utterback T."/>
            <person name="Van Aken S."/>
            <person name="Vaysberg M."/>
            <person name="Vysotskaia V.S."/>
            <person name="Walker M."/>
            <person name="Wu D."/>
            <person name="Yu G."/>
            <person name="Fraser C.M."/>
            <person name="Venter J.C."/>
            <person name="Davis R.W."/>
        </authorList>
    </citation>
    <scope>NUCLEOTIDE SEQUENCE [LARGE SCALE GENOMIC DNA]</scope>
    <source>
        <strain>cv. Columbia</strain>
    </source>
</reference>
<reference key="2">
    <citation type="journal article" date="2017" name="Plant J.">
        <title>Araport11: a complete reannotation of the Arabidopsis thaliana reference genome.</title>
        <authorList>
            <person name="Cheng C.Y."/>
            <person name="Krishnakumar V."/>
            <person name="Chan A.P."/>
            <person name="Thibaud-Nissen F."/>
            <person name="Schobel S."/>
            <person name="Town C.D."/>
        </authorList>
    </citation>
    <scope>GENOME REANNOTATION</scope>
    <source>
        <strain>cv. Columbia</strain>
    </source>
</reference>
<reference key="3">
    <citation type="journal article" date="2004" name="Genome Res.">
        <title>Whole genome sequence comparisons and 'full-length' cDNA sequences: a combined approach to evaluate and improve Arabidopsis genome annotation.</title>
        <authorList>
            <person name="Castelli V."/>
            <person name="Aury J.-M."/>
            <person name="Jaillon O."/>
            <person name="Wincker P."/>
            <person name="Clepet C."/>
            <person name="Menard M."/>
            <person name="Cruaud C."/>
            <person name="Quetier F."/>
            <person name="Scarpelli C."/>
            <person name="Schaechter V."/>
            <person name="Temple G."/>
            <person name="Caboche M."/>
            <person name="Weissenbach J."/>
            <person name="Salanoubat M."/>
        </authorList>
    </citation>
    <scope>NUCLEOTIDE SEQUENCE [LARGE SCALE MRNA] OF 701-943</scope>
    <source>
        <strain>cv. Columbia</strain>
    </source>
</reference>
<reference key="4">
    <citation type="journal article" date="2008" name="J. Integr. Plant Biol.">
        <title>Comparative analysis of JmjC domain-containing proteins reveals the potential histone demethylases in Arabidopsis and rice.</title>
        <authorList>
            <person name="Lu F."/>
            <person name="Li G."/>
            <person name="Cui X."/>
            <person name="Liu C."/>
            <person name="Wang X.-J."/>
            <person name="Cao X."/>
        </authorList>
    </citation>
    <scope>GENE FAMILY</scope>
    <scope>NOMENCLATURE</scope>
    <scope>TISSUE SPECIFICITY</scope>
</reference>
<protein>
    <recommendedName>
        <fullName evidence="7">Lysine-specific demethylase JMJ21</fullName>
        <ecNumber evidence="1">1.14.11.-</ecNumber>
    </recommendedName>
    <alternativeName>
        <fullName evidence="8">F-box protein JMJ21</fullName>
    </alternativeName>
    <alternativeName>
        <fullName evidence="7">Jumonji domain-containing protein 21</fullName>
        <shortName evidence="7">AtJMJ21</shortName>
        <shortName evidence="7">Protein JUMONJI 21</shortName>
    </alternativeName>
    <alternativeName>
        <fullName evidence="7">Lysine-specific histone demethylase JMJ21</fullName>
    </alternativeName>
    <alternativeName>
        <fullName evidence="8">[histone H3]-trimethyl-L-lysine monodemethylase JMJ21</fullName>
    </alternativeName>
</protein>
<feature type="chain" id="PRO_0000283365" description="Lysine-specific demethylase JMJ21">
    <location>
        <begin position="1"/>
        <end position="943"/>
    </location>
</feature>
<feature type="domain" description="F-box" evidence="3">
    <location>
        <begin position="14"/>
        <end position="60"/>
    </location>
</feature>
<feature type="domain" description="JmjC" evidence="4">
    <location>
        <begin position="216"/>
        <end position="379"/>
    </location>
</feature>
<feature type="region of interest" description="Disordered" evidence="5">
    <location>
        <begin position="396"/>
        <end position="438"/>
    </location>
</feature>
<feature type="compositionally biased region" description="Acidic residues" evidence="5">
    <location>
        <begin position="396"/>
        <end position="410"/>
    </location>
</feature>
<feature type="binding site" evidence="4">
    <location>
        <position position="262"/>
    </location>
    <ligand>
        <name>Fe cation</name>
        <dbReference type="ChEBI" id="CHEBI:24875"/>
        <note>catalytic</note>
    </ligand>
</feature>
<feature type="binding site" evidence="4">
    <location>
        <position position="264"/>
    </location>
    <ligand>
        <name>Fe cation</name>
        <dbReference type="ChEBI" id="CHEBI:24875"/>
        <note>catalytic</note>
    </ligand>
</feature>
<feature type="binding site" evidence="4">
    <location>
        <position position="347"/>
    </location>
    <ligand>
        <name>Fe cation</name>
        <dbReference type="ChEBI" id="CHEBI:24875"/>
        <note>catalytic</note>
    </ligand>
</feature>
<dbReference type="EC" id="1.14.11.-" evidence="1"/>
<dbReference type="EMBL" id="AC013430">
    <property type="protein sequence ID" value="AAF71807.1"/>
    <property type="status" value="ALT_SEQ"/>
    <property type="molecule type" value="Genomic_DNA"/>
</dbReference>
<dbReference type="EMBL" id="CP002684">
    <property type="protein sequence ID" value="AEE36090.1"/>
    <property type="molecule type" value="Genomic_DNA"/>
</dbReference>
<dbReference type="EMBL" id="BX817819">
    <property type="status" value="NOT_ANNOTATED_CDS"/>
    <property type="molecule type" value="mRNA"/>
</dbReference>
<dbReference type="PIR" id="A96812">
    <property type="entry name" value="A96812"/>
</dbReference>
<dbReference type="RefSeq" id="NP_177951.6">
    <property type="nucleotide sequence ID" value="NM_106477.7"/>
</dbReference>
<dbReference type="SMR" id="Q9M9E8"/>
<dbReference type="BioGRID" id="29382">
    <property type="interactions" value="1"/>
</dbReference>
<dbReference type="FunCoup" id="Q9M9E8">
    <property type="interactions" value="882"/>
</dbReference>
<dbReference type="IntAct" id="Q9M9E8">
    <property type="interactions" value="1"/>
</dbReference>
<dbReference type="STRING" id="3702.Q9M9E8"/>
<dbReference type="iPTMnet" id="Q9M9E8"/>
<dbReference type="PaxDb" id="3702-AT1G78280.1"/>
<dbReference type="ProteomicsDB" id="222405"/>
<dbReference type="EnsemblPlants" id="AT1G78280.1">
    <property type="protein sequence ID" value="AT1G78280.1"/>
    <property type="gene ID" value="AT1G78280"/>
</dbReference>
<dbReference type="GeneID" id="844163"/>
<dbReference type="Gramene" id="AT1G78280.1">
    <property type="protein sequence ID" value="AT1G78280.1"/>
    <property type="gene ID" value="AT1G78280"/>
</dbReference>
<dbReference type="KEGG" id="ath:AT1G78280"/>
<dbReference type="Araport" id="AT1G78280"/>
<dbReference type="TAIR" id="AT1G78280"/>
<dbReference type="eggNOG" id="KOG2130">
    <property type="taxonomic scope" value="Eukaryota"/>
</dbReference>
<dbReference type="HOGENOM" id="CLU_012984_0_0_1"/>
<dbReference type="InParanoid" id="Q9M9E8"/>
<dbReference type="OMA" id="AIFSIWK"/>
<dbReference type="OrthoDB" id="424465at2759"/>
<dbReference type="PhylomeDB" id="Q9M9E8"/>
<dbReference type="PRO" id="PR:Q9M9E8"/>
<dbReference type="Proteomes" id="UP000006548">
    <property type="component" value="Chromosome 1"/>
</dbReference>
<dbReference type="ExpressionAtlas" id="Q9M9E8">
    <property type="expression patterns" value="baseline and differential"/>
</dbReference>
<dbReference type="GO" id="GO:0005634">
    <property type="term" value="C:nucleus"/>
    <property type="evidence" value="ECO:0007669"/>
    <property type="project" value="UniProtKB-SubCell"/>
</dbReference>
<dbReference type="GO" id="GO:0046872">
    <property type="term" value="F:metal ion binding"/>
    <property type="evidence" value="ECO:0007669"/>
    <property type="project" value="UniProtKB-KW"/>
</dbReference>
<dbReference type="GO" id="GO:0016491">
    <property type="term" value="F:oxidoreductase activity"/>
    <property type="evidence" value="ECO:0007669"/>
    <property type="project" value="UniProtKB-KW"/>
</dbReference>
<dbReference type="CDD" id="cd09917">
    <property type="entry name" value="F-box_SF"/>
    <property type="match status" value="1"/>
</dbReference>
<dbReference type="FunFam" id="2.60.120.650:FF:000045">
    <property type="entry name" value="F-box protein At1g78280"/>
    <property type="match status" value="1"/>
</dbReference>
<dbReference type="Gene3D" id="1.20.1280.50">
    <property type="match status" value="1"/>
</dbReference>
<dbReference type="Gene3D" id="2.60.120.650">
    <property type="entry name" value="Cupin"/>
    <property type="match status" value="1"/>
</dbReference>
<dbReference type="InterPro" id="IPR002575">
    <property type="entry name" value="Aminoglycoside_PTrfase"/>
</dbReference>
<dbReference type="InterPro" id="IPR041667">
    <property type="entry name" value="Cupin_8"/>
</dbReference>
<dbReference type="InterPro" id="IPR036047">
    <property type="entry name" value="F-box-like_dom_sf"/>
</dbReference>
<dbReference type="InterPro" id="IPR001810">
    <property type="entry name" value="F-box_dom"/>
</dbReference>
<dbReference type="InterPro" id="IPR003347">
    <property type="entry name" value="JmjC_dom"/>
</dbReference>
<dbReference type="InterPro" id="IPR050910">
    <property type="entry name" value="JMJD6_ArgDemeth/LysHydrox"/>
</dbReference>
<dbReference type="InterPro" id="IPR011009">
    <property type="entry name" value="Kinase-like_dom_sf"/>
</dbReference>
<dbReference type="PANTHER" id="PTHR12480">
    <property type="entry name" value="ARGININE DEMETHYLASE AND LYSYL-HYDROXYLASE JMJD"/>
    <property type="match status" value="1"/>
</dbReference>
<dbReference type="PANTHER" id="PTHR12480:SF35">
    <property type="entry name" value="TRANSCRIPTION FACTOR JUMONJI, JMJC DOMAIN-CONTAINING PROTEIN"/>
    <property type="match status" value="1"/>
</dbReference>
<dbReference type="Pfam" id="PF01636">
    <property type="entry name" value="APH"/>
    <property type="match status" value="1"/>
</dbReference>
<dbReference type="Pfam" id="PF13621">
    <property type="entry name" value="Cupin_8"/>
    <property type="match status" value="1"/>
</dbReference>
<dbReference type="Pfam" id="PF12937">
    <property type="entry name" value="F-box-like"/>
    <property type="match status" value="1"/>
</dbReference>
<dbReference type="SMART" id="SM00558">
    <property type="entry name" value="JmjC"/>
    <property type="match status" value="1"/>
</dbReference>
<dbReference type="SUPFAM" id="SSF51197">
    <property type="entry name" value="Clavaminate synthase-like"/>
    <property type="match status" value="1"/>
</dbReference>
<dbReference type="SUPFAM" id="SSF81383">
    <property type="entry name" value="F-box domain"/>
    <property type="match status" value="1"/>
</dbReference>
<dbReference type="SUPFAM" id="SSF56112">
    <property type="entry name" value="Protein kinase-like (PK-like)"/>
    <property type="match status" value="1"/>
</dbReference>
<dbReference type="PROSITE" id="PS50181">
    <property type="entry name" value="FBOX"/>
    <property type="match status" value="1"/>
</dbReference>
<dbReference type="PROSITE" id="PS51184">
    <property type="entry name" value="JMJC"/>
    <property type="match status" value="1"/>
</dbReference>
<sequence length="943" mass="108505">MTTLGQRDRRPDALGSLSVLPDETICVLLEYLAPRDIAHLACVSSVMYILCNEEPLWMSLCLRRAKGPLEYKGSWKKTTLHLEGVTQENDAYRKCFHFDGFMSLYLYKRFYRCNTSLDGFSFDNGNVERRRNISLDEFSKEYDAKKPVLLSGLADSWPASNTWTIDQLSEKYGEVPFRISQRSPNKISMKFKDYIAYMKTQRDEDPLYVFDDKFGEAAPELLKDYSVPHLFQEDWFEILDKESRPPYRWLIVGPERSGASWHVDPALTSAWNTLLCGRKRWALYPPGKVPLGVTVHVNEDDGDVSIDTPSSLQWWLDYYPLLADEDKPIECTLLPGETIYVPSGWWHCILNLEPTVAVTQNFVNKENFGFVCLDMAPGYHHKGVCRAGLLALDDENSEDLEEETHDEEDNTLSYSDLTRKEKRTRMNGGGETENREEDVNGVSKRYNMWKNGFSYDIDFLASFLDKERDHYNFPWSMGNSVGQREMRAWLSKLWVLKPEMRELIWKGACIALNAEKWLRCLEEVCTFHNLPLVTEDEKLPVGTGSNPVYLLSDYAIKLFVEGGLEQSMYGLGTELEFYDILGRADSPLKTHIPEVLASGILFFEKGSYKVVPWDGKRIPDIISSSSFDFDASMLNSEFPFGIWNKTLREHKNQGKPAPDSFGSLSSHVWPYIITKRCKGKIFAQLRDDLTWNDAQNLAFFLGQQLRNLHLLPYPPVTRPELLNVNAVHEELNIPAEWKVFVDALCQKKKDVTSRLENWGNPIPRALMTKIDEYIPDDFFVDLLHVFKETNGGDEIKPCTWIHSDVMDDNIHMEPYADDSVDGQHNSWRPSHILDFSDLTIGDPICDLIPIYLDVFRGDADLLKKLLENYGLPLIRSRSSENGTTKTADSTRKKVLSPSYRTMCYCILHEENVLGSIFSIWDELRTAESWEQVEQTVWSLLNTY</sequence>
<organism>
    <name type="scientific">Arabidopsis thaliana</name>
    <name type="common">Mouse-ear cress</name>
    <dbReference type="NCBI Taxonomy" id="3702"/>
    <lineage>
        <taxon>Eukaryota</taxon>
        <taxon>Viridiplantae</taxon>
        <taxon>Streptophyta</taxon>
        <taxon>Embryophyta</taxon>
        <taxon>Tracheophyta</taxon>
        <taxon>Spermatophyta</taxon>
        <taxon>Magnoliopsida</taxon>
        <taxon>eudicotyledons</taxon>
        <taxon>Gunneridae</taxon>
        <taxon>Pentapetalae</taxon>
        <taxon>rosids</taxon>
        <taxon>malvids</taxon>
        <taxon>Brassicales</taxon>
        <taxon>Brassicaceae</taxon>
        <taxon>Camelineae</taxon>
        <taxon>Arabidopsis</taxon>
    </lineage>
</organism>
<accession>Q9M9E8</accession>
<name>JMJ21_ARATH</name>
<proteinExistence type="evidence at transcript level"/>